<sequence length="159" mass="18151">MSQVILDLQIASEQAQGLPEEKDFQRWLEGVLPQFQEVSEVTIRIVDEAESRDLNNTYRGKDKPTNVLSFPFEAPPEVELPLLGDLIICRQVVEREAVEQEKTVEEHWAHMVVHGSLHLLGYDHIEDSEAEEMEALETEIMQSMGYADPYLAEKDGLTE</sequence>
<reference key="1">
    <citation type="journal article" date="2004" name="Proc. Natl. Acad. Sci. U.S.A.">
        <title>Genome sequence of the enterobacterial phytopathogen Erwinia carotovora subsp. atroseptica and characterization of virulence factors.</title>
        <authorList>
            <person name="Bell K.S."/>
            <person name="Sebaihia M."/>
            <person name="Pritchard L."/>
            <person name="Holden M.T.G."/>
            <person name="Hyman L.J."/>
            <person name="Holeva M.C."/>
            <person name="Thomson N.R."/>
            <person name="Bentley S.D."/>
            <person name="Churcher L.J.C."/>
            <person name="Mungall K."/>
            <person name="Atkin R."/>
            <person name="Bason N."/>
            <person name="Brooks K."/>
            <person name="Chillingworth T."/>
            <person name="Clark K."/>
            <person name="Doggett J."/>
            <person name="Fraser A."/>
            <person name="Hance Z."/>
            <person name="Hauser H."/>
            <person name="Jagels K."/>
            <person name="Moule S."/>
            <person name="Norbertczak H."/>
            <person name="Ormond D."/>
            <person name="Price C."/>
            <person name="Quail M.A."/>
            <person name="Sanders M."/>
            <person name="Walker D."/>
            <person name="Whitehead S."/>
            <person name="Salmond G.P.C."/>
            <person name="Birch P.R.J."/>
            <person name="Parkhill J."/>
            <person name="Toth I.K."/>
        </authorList>
    </citation>
    <scope>NUCLEOTIDE SEQUENCE [LARGE SCALE GENOMIC DNA]</scope>
    <source>
        <strain>SCRI 1043 / ATCC BAA-672</strain>
    </source>
</reference>
<feature type="chain" id="PRO_0000102455" description="Endoribonuclease YbeY">
    <location>
        <begin position="1"/>
        <end position="159"/>
    </location>
</feature>
<feature type="binding site" evidence="1">
    <location>
        <position position="114"/>
    </location>
    <ligand>
        <name>Zn(2+)</name>
        <dbReference type="ChEBI" id="CHEBI:29105"/>
        <note>catalytic</note>
    </ligand>
</feature>
<feature type="binding site" evidence="1">
    <location>
        <position position="118"/>
    </location>
    <ligand>
        <name>Zn(2+)</name>
        <dbReference type="ChEBI" id="CHEBI:29105"/>
        <note>catalytic</note>
    </ligand>
</feature>
<feature type="binding site" evidence="1">
    <location>
        <position position="124"/>
    </location>
    <ligand>
        <name>Zn(2+)</name>
        <dbReference type="ChEBI" id="CHEBI:29105"/>
        <note>catalytic</note>
    </ligand>
</feature>
<comment type="function">
    <text evidence="1">Single strand-specific metallo-endoribonuclease involved in late-stage 70S ribosome quality control and in maturation of the 3' terminus of the 16S rRNA.</text>
</comment>
<comment type="cofactor">
    <cofactor evidence="1">
        <name>Zn(2+)</name>
        <dbReference type="ChEBI" id="CHEBI:29105"/>
    </cofactor>
    <text evidence="1">Binds 1 zinc ion.</text>
</comment>
<comment type="subcellular location">
    <subcellularLocation>
        <location evidence="1">Cytoplasm</location>
    </subcellularLocation>
</comment>
<comment type="similarity">
    <text evidence="1">Belongs to the endoribonuclease YbeY family.</text>
</comment>
<protein>
    <recommendedName>
        <fullName evidence="1">Endoribonuclease YbeY</fullName>
        <ecNumber evidence="1">3.1.-.-</ecNumber>
    </recommendedName>
</protein>
<accession>Q6D7K8</accession>
<evidence type="ECO:0000255" key="1">
    <source>
        <dbReference type="HAMAP-Rule" id="MF_00009"/>
    </source>
</evidence>
<keyword id="KW-0963">Cytoplasm</keyword>
<keyword id="KW-0255">Endonuclease</keyword>
<keyword id="KW-0378">Hydrolase</keyword>
<keyword id="KW-0479">Metal-binding</keyword>
<keyword id="KW-0540">Nuclease</keyword>
<keyword id="KW-1185">Reference proteome</keyword>
<keyword id="KW-0690">Ribosome biogenesis</keyword>
<keyword id="KW-0698">rRNA processing</keyword>
<keyword id="KW-0862">Zinc</keyword>
<name>YBEY_PECAS</name>
<proteinExistence type="inferred from homology"/>
<dbReference type="EC" id="3.1.-.-" evidence="1"/>
<dbReference type="EMBL" id="BX950851">
    <property type="protein sequence ID" value="CAG74227.1"/>
    <property type="molecule type" value="Genomic_DNA"/>
</dbReference>
<dbReference type="RefSeq" id="WP_011092903.1">
    <property type="nucleotide sequence ID" value="NC_004547.2"/>
</dbReference>
<dbReference type="SMR" id="Q6D7K8"/>
<dbReference type="STRING" id="218491.ECA1317"/>
<dbReference type="GeneID" id="57208127"/>
<dbReference type="KEGG" id="eca:ECA1317"/>
<dbReference type="PATRIC" id="fig|218491.5.peg.1345"/>
<dbReference type="eggNOG" id="COG0319">
    <property type="taxonomic scope" value="Bacteria"/>
</dbReference>
<dbReference type="HOGENOM" id="CLU_106710_0_1_6"/>
<dbReference type="OrthoDB" id="9807740at2"/>
<dbReference type="Proteomes" id="UP000007966">
    <property type="component" value="Chromosome"/>
</dbReference>
<dbReference type="GO" id="GO:0005737">
    <property type="term" value="C:cytoplasm"/>
    <property type="evidence" value="ECO:0007669"/>
    <property type="project" value="UniProtKB-SubCell"/>
</dbReference>
<dbReference type="GO" id="GO:0004222">
    <property type="term" value="F:metalloendopeptidase activity"/>
    <property type="evidence" value="ECO:0007669"/>
    <property type="project" value="InterPro"/>
</dbReference>
<dbReference type="GO" id="GO:0004521">
    <property type="term" value="F:RNA endonuclease activity"/>
    <property type="evidence" value="ECO:0007669"/>
    <property type="project" value="UniProtKB-UniRule"/>
</dbReference>
<dbReference type="GO" id="GO:0008270">
    <property type="term" value="F:zinc ion binding"/>
    <property type="evidence" value="ECO:0007669"/>
    <property type="project" value="UniProtKB-UniRule"/>
</dbReference>
<dbReference type="GO" id="GO:0006364">
    <property type="term" value="P:rRNA processing"/>
    <property type="evidence" value="ECO:0007669"/>
    <property type="project" value="UniProtKB-UniRule"/>
</dbReference>
<dbReference type="Gene3D" id="3.40.390.30">
    <property type="entry name" value="Metalloproteases ('zincins'), catalytic domain"/>
    <property type="match status" value="1"/>
</dbReference>
<dbReference type="HAMAP" id="MF_00009">
    <property type="entry name" value="Endoribonucl_YbeY"/>
    <property type="match status" value="1"/>
</dbReference>
<dbReference type="InterPro" id="IPR023091">
    <property type="entry name" value="MetalPrtase_cat_dom_sf_prd"/>
</dbReference>
<dbReference type="InterPro" id="IPR002036">
    <property type="entry name" value="YbeY"/>
</dbReference>
<dbReference type="InterPro" id="IPR020549">
    <property type="entry name" value="YbeY_CS"/>
</dbReference>
<dbReference type="NCBIfam" id="TIGR00043">
    <property type="entry name" value="rRNA maturation RNase YbeY"/>
    <property type="match status" value="1"/>
</dbReference>
<dbReference type="PANTHER" id="PTHR46986">
    <property type="entry name" value="ENDORIBONUCLEASE YBEY, CHLOROPLASTIC"/>
    <property type="match status" value="1"/>
</dbReference>
<dbReference type="PANTHER" id="PTHR46986:SF1">
    <property type="entry name" value="ENDORIBONUCLEASE YBEY, CHLOROPLASTIC"/>
    <property type="match status" value="1"/>
</dbReference>
<dbReference type="Pfam" id="PF02130">
    <property type="entry name" value="YbeY"/>
    <property type="match status" value="1"/>
</dbReference>
<dbReference type="SUPFAM" id="SSF55486">
    <property type="entry name" value="Metalloproteases ('zincins'), catalytic domain"/>
    <property type="match status" value="1"/>
</dbReference>
<dbReference type="PROSITE" id="PS01306">
    <property type="entry name" value="UPF0054"/>
    <property type="match status" value="1"/>
</dbReference>
<organism>
    <name type="scientific">Pectobacterium atrosepticum (strain SCRI 1043 / ATCC BAA-672)</name>
    <name type="common">Erwinia carotovora subsp. atroseptica</name>
    <dbReference type="NCBI Taxonomy" id="218491"/>
    <lineage>
        <taxon>Bacteria</taxon>
        <taxon>Pseudomonadati</taxon>
        <taxon>Pseudomonadota</taxon>
        <taxon>Gammaproteobacteria</taxon>
        <taxon>Enterobacterales</taxon>
        <taxon>Pectobacteriaceae</taxon>
        <taxon>Pectobacterium</taxon>
    </lineage>
</organism>
<gene>
    <name evidence="1" type="primary">ybeY</name>
    <name type="ordered locus">ECA1317</name>
</gene>